<evidence type="ECO:0000250" key="1"/>
<evidence type="ECO:0000269" key="2">
    <source>
    </source>
</evidence>
<evidence type="ECO:0000269" key="3">
    <source>
    </source>
</evidence>
<evidence type="ECO:0000305" key="4"/>
<evidence type="ECO:0007744" key="5">
    <source>
    </source>
</evidence>
<evidence type="ECO:0007744" key="6">
    <source>
    </source>
</evidence>
<evidence type="ECO:0007744" key="7">
    <source>
    </source>
</evidence>
<evidence type="ECO:0007744" key="8">
    <source>
    </source>
</evidence>
<evidence type="ECO:0007744" key="9">
    <source>
    </source>
</evidence>
<comment type="function">
    <text evidence="1">Blocks the elongation and depolymerization of the actin filaments at the pointed end. The Tmod/TM complex contributes to the formation of the short actin protofilament, which in turn defines the geometry of the membrane skeleton (By similarity).</text>
</comment>
<comment type="subunit">
    <text evidence="1 3">Binds to the N-terminus of tropomyosin and to actin. Interacts with FLII (PubMed:37126682).</text>
</comment>
<comment type="subcellular location">
    <subcellularLocation>
        <location evidence="1">Cytoplasm</location>
        <location evidence="1">Cytoskeleton</location>
    </subcellularLocation>
</comment>
<comment type="tissue specificity">
    <text evidence="2">Ubiquitous.</text>
</comment>
<comment type="similarity">
    <text evidence="4">Belongs to the tropomodulin family.</text>
</comment>
<sequence length="352" mass="39595">MALPFRKDLEKYKDLDEDELLGNLSETELKQLETVLDDLDPENALLPAGFRQKNQTSKSTTGPFDREHLLSYLEKEALEHKDREDYVPYTGEKKGKIFIPKQKPVQTFTEEKVSLDPELEEALTSASDTELCDLAAILGMHNLITNTKFCNIMGSSNGVDQEHFSNVVKGEKILPVFDEPPNPTNVEESLKRTKENDAHLVEVNLNNIKNIPIPTLKDFAKALETNTHVKCFSLAATRSNDPVATAFAEMLKVNKTLKSLNVESNFITGVGILALIDALRDNETLAELKIDNQRQQLGTAVELEMAKMLEENTNILKFGYQFTQQGPRTRAANAITKNNDLVRKRRVEGDHQ</sequence>
<dbReference type="EMBL" id="AF237631">
    <property type="protein sequence ID" value="AAF45299.1"/>
    <property type="molecule type" value="mRNA"/>
</dbReference>
<dbReference type="EMBL" id="AF177171">
    <property type="protein sequence ID" value="AAF31670.1"/>
    <property type="molecule type" value="mRNA"/>
</dbReference>
<dbReference type="EMBL" id="AK312569">
    <property type="protein sequence ID" value="BAG35464.1"/>
    <property type="molecule type" value="mRNA"/>
</dbReference>
<dbReference type="EMBL" id="BC020542">
    <property type="protein sequence ID" value="AAH20542.1"/>
    <property type="molecule type" value="mRNA"/>
</dbReference>
<dbReference type="EMBL" id="AL137543">
    <property type="protein sequence ID" value="CAB70801.1"/>
    <property type="molecule type" value="mRNA"/>
</dbReference>
<dbReference type="CCDS" id="CCDS10145.1"/>
<dbReference type="PIR" id="T46384">
    <property type="entry name" value="T46384"/>
</dbReference>
<dbReference type="RefSeq" id="NP_055362.1">
    <property type="nucleotide sequence ID" value="NM_014547.5"/>
</dbReference>
<dbReference type="RefSeq" id="XP_016877576.1">
    <property type="nucleotide sequence ID" value="XM_017022087.1"/>
</dbReference>
<dbReference type="RefSeq" id="XP_016877577.1">
    <property type="nucleotide sequence ID" value="XM_017022088.1"/>
</dbReference>
<dbReference type="SMR" id="Q9NYL9"/>
<dbReference type="BioGRID" id="118899">
    <property type="interactions" value="271"/>
</dbReference>
<dbReference type="FunCoup" id="Q9NYL9">
    <property type="interactions" value="1358"/>
</dbReference>
<dbReference type="IntAct" id="Q9NYL9">
    <property type="interactions" value="141"/>
</dbReference>
<dbReference type="MINT" id="Q9NYL9"/>
<dbReference type="STRING" id="9606.ENSP00000308753"/>
<dbReference type="GlyGen" id="Q9NYL9">
    <property type="glycosylation" value="1 site, 1 O-linked glycan (1 site)"/>
</dbReference>
<dbReference type="iPTMnet" id="Q9NYL9"/>
<dbReference type="MetOSite" id="Q9NYL9"/>
<dbReference type="PhosphoSitePlus" id="Q9NYL9"/>
<dbReference type="SwissPalm" id="Q9NYL9"/>
<dbReference type="BioMuta" id="TMOD3"/>
<dbReference type="DMDM" id="23396884"/>
<dbReference type="OGP" id="Q9NYL9"/>
<dbReference type="jPOST" id="Q9NYL9"/>
<dbReference type="MassIVE" id="Q9NYL9"/>
<dbReference type="PaxDb" id="9606-ENSP00000308753"/>
<dbReference type="PeptideAtlas" id="Q9NYL9"/>
<dbReference type="PRIDE" id="Q9NYL9"/>
<dbReference type="ProteomicsDB" id="83252"/>
<dbReference type="Pumba" id="Q9NYL9"/>
<dbReference type="TopDownProteomics" id="Q9NYL9"/>
<dbReference type="Antibodypedia" id="978">
    <property type="antibodies" value="152 antibodies from 28 providers"/>
</dbReference>
<dbReference type="DNASU" id="29766"/>
<dbReference type="Ensembl" id="ENST00000308580.12">
    <property type="protein sequence ID" value="ENSP00000308753.7"/>
    <property type="gene ID" value="ENSG00000138594.14"/>
</dbReference>
<dbReference type="GeneID" id="29766"/>
<dbReference type="KEGG" id="hsa:29766"/>
<dbReference type="MANE-Select" id="ENST00000308580.12">
    <property type="protein sequence ID" value="ENSP00000308753.7"/>
    <property type="RefSeq nucleotide sequence ID" value="NM_014547.5"/>
    <property type="RefSeq protein sequence ID" value="NP_055362.1"/>
</dbReference>
<dbReference type="UCSC" id="uc002abn.4">
    <property type="organism name" value="human"/>
</dbReference>
<dbReference type="AGR" id="HGNC:11873"/>
<dbReference type="CTD" id="29766"/>
<dbReference type="DisGeNET" id="29766"/>
<dbReference type="GeneCards" id="TMOD3"/>
<dbReference type="HGNC" id="HGNC:11873">
    <property type="gene designation" value="TMOD3"/>
</dbReference>
<dbReference type="HPA" id="ENSG00000138594">
    <property type="expression patterns" value="Low tissue specificity"/>
</dbReference>
<dbReference type="MIM" id="605112">
    <property type="type" value="gene"/>
</dbReference>
<dbReference type="neXtProt" id="NX_Q9NYL9"/>
<dbReference type="OpenTargets" id="ENSG00000138594"/>
<dbReference type="PharmGKB" id="PA36574"/>
<dbReference type="VEuPathDB" id="HostDB:ENSG00000138594"/>
<dbReference type="eggNOG" id="KOG3735">
    <property type="taxonomic scope" value="Eukaryota"/>
</dbReference>
<dbReference type="GeneTree" id="ENSGT00940000158280"/>
<dbReference type="HOGENOM" id="CLU_031052_0_1_1"/>
<dbReference type="InParanoid" id="Q9NYL9"/>
<dbReference type="OMA" id="CDLAXVV"/>
<dbReference type="OrthoDB" id="2163268at2759"/>
<dbReference type="PAN-GO" id="Q9NYL9">
    <property type="GO annotations" value="7 GO annotations based on evolutionary models"/>
</dbReference>
<dbReference type="PhylomeDB" id="Q9NYL9"/>
<dbReference type="TreeFam" id="TF315841"/>
<dbReference type="PathwayCommons" id="Q9NYL9"/>
<dbReference type="Reactome" id="R-HSA-390522">
    <property type="pathway name" value="Striated Muscle Contraction"/>
</dbReference>
<dbReference type="Reactome" id="R-HSA-9013418">
    <property type="pathway name" value="RHOBTB2 GTPase cycle"/>
</dbReference>
<dbReference type="Reactome" id="R-HSA-9696264">
    <property type="pathway name" value="RND3 GTPase cycle"/>
</dbReference>
<dbReference type="SignaLink" id="Q9NYL9"/>
<dbReference type="BioGRID-ORCS" id="29766">
    <property type="hits" value="17 hits in 1152 CRISPR screens"/>
</dbReference>
<dbReference type="CD-CODE" id="DEE660B4">
    <property type="entry name" value="Stress granule"/>
</dbReference>
<dbReference type="ChiTaRS" id="TMOD3">
    <property type="organism name" value="human"/>
</dbReference>
<dbReference type="GeneWiki" id="TMOD3"/>
<dbReference type="GenomeRNAi" id="29766"/>
<dbReference type="Pharos" id="Q9NYL9">
    <property type="development level" value="Tbio"/>
</dbReference>
<dbReference type="PRO" id="PR:Q9NYL9"/>
<dbReference type="Proteomes" id="UP000005640">
    <property type="component" value="Chromosome 15"/>
</dbReference>
<dbReference type="RNAct" id="Q9NYL9">
    <property type="molecule type" value="protein"/>
</dbReference>
<dbReference type="Bgee" id="ENSG00000138594">
    <property type="expression patterns" value="Expressed in amniotic fluid and 184 other cell types or tissues"/>
</dbReference>
<dbReference type="ExpressionAtlas" id="Q9NYL9">
    <property type="expression patterns" value="baseline and differential"/>
</dbReference>
<dbReference type="GO" id="GO:0005912">
    <property type="term" value="C:adherens junction"/>
    <property type="evidence" value="ECO:0007005"/>
    <property type="project" value="BHF-UCL"/>
</dbReference>
<dbReference type="GO" id="GO:0005856">
    <property type="term" value="C:cytoskeleton"/>
    <property type="evidence" value="ECO:0000318"/>
    <property type="project" value="GO_Central"/>
</dbReference>
<dbReference type="GO" id="GO:0030016">
    <property type="term" value="C:myofibril"/>
    <property type="evidence" value="ECO:0000318"/>
    <property type="project" value="GO_Central"/>
</dbReference>
<dbReference type="GO" id="GO:0005865">
    <property type="term" value="C:striated muscle thin filament"/>
    <property type="evidence" value="ECO:0000318"/>
    <property type="project" value="GO_Central"/>
</dbReference>
<dbReference type="GO" id="GO:0003779">
    <property type="term" value="F:actin binding"/>
    <property type="evidence" value="ECO:0007669"/>
    <property type="project" value="UniProtKB-KW"/>
</dbReference>
<dbReference type="GO" id="GO:0098641">
    <property type="term" value="F:cadherin binding involved in cell-cell adhesion"/>
    <property type="evidence" value="ECO:0007005"/>
    <property type="project" value="BHF-UCL"/>
</dbReference>
<dbReference type="GO" id="GO:0005523">
    <property type="term" value="F:tropomyosin binding"/>
    <property type="evidence" value="ECO:0000318"/>
    <property type="project" value="GO_Central"/>
</dbReference>
<dbReference type="GO" id="GO:0007015">
    <property type="term" value="P:actin filament organization"/>
    <property type="evidence" value="ECO:0000318"/>
    <property type="project" value="GO_Central"/>
</dbReference>
<dbReference type="GO" id="GO:0048821">
    <property type="term" value="P:erythrocyte development"/>
    <property type="evidence" value="ECO:0007669"/>
    <property type="project" value="Ensembl"/>
</dbReference>
<dbReference type="GO" id="GO:0044772">
    <property type="term" value="P:mitotic cell cycle phase transition"/>
    <property type="evidence" value="ECO:0007669"/>
    <property type="project" value="Ensembl"/>
</dbReference>
<dbReference type="GO" id="GO:0006936">
    <property type="term" value="P:muscle contraction"/>
    <property type="evidence" value="ECO:0000318"/>
    <property type="project" value="GO_Central"/>
</dbReference>
<dbReference type="GO" id="GO:0030239">
    <property type="term" value="P:myofibril assembly"/>
    <property type="evidence" value="ECO:0000318"/>
    <property type="project" value="GO_Central"/>
</dbReference>
<dbReference type="GO" id="GO:0051694">
    <property type="term" value="P:pointed-end actin filament capping"/>
    <property type="evidence" value="ECO:0007669"/>
    <property type="project" value="InterPro"/>
</dbReference>
<dbReference type="GO" id="GO:1901992">
    <property type="term" value="P:positive regulation of mitotic cell cycle phase transition"/>
    <property type="evidence" value="ECO:0007669"/>
    <property type="project" value="Ensembl"/>
</dbReference>
<dbReference type="FunFam" id="3.80.10.10:FF:000006">
    <property type="entry name" value="Tropomodulin 2"/>
    <property type="match status" value="1"/>
</dbReference>
<dbReference type="Gene3D" id="3.80.10.10">
    <property type="entry name" value="Ribonuclease Inhibitor"/>
    <property type="match status" value="1"/>
</dbReference>
<dbReference type="InterPro" id="IPR032675">
    <property type="entry name" value="LRR_dom_sf"/>
</dbReference>
<dbReference type="InterPro" id="IPR004934">
    <property type="entry name" value="TMOD"/>
</dbReference>
<dbReference type="PANTHER" id="PTHR10901">
    <property type="entry name" value="TROPOMODULIN"/>
    <property type="match status" value="1"/>
</dbReference>
<dbReference type="PANTHER" id="PTHR10901:SF18">
    <property type="entry name" value="TROPOMODULIN-3"/>
    <property type="match status" value="1"/>
</dbReference>
<dbReference type="Pfam" id="PF03250">
    <property type="entry name" value="Tropomodulin"/>
    <property type="match status" value="1"/>
</dbReference>
<dbReference type="SUPFAM" id="SSF52047">
    <property type="entry name" value="RNI-like"/>
    <property type="match status" value="1"/>
</dbReference>
<organism>
    <name type="scientific">Homo sapiens</name>
    <name type="common">Human</name>
    <dbReference type="NCBI Taxonomy" id="9606"/>
    <lineage>
        <taxon>Eukaryota</taxon>
        <taxon>Metazoa</taxon>
        <taxon>Chordata</taxon>
        <taxon>Craniata</taxon>
        <taxon>Vertebrata</taxon>
        <taxon>Euteleostomi</taxon>
        <taxon>Mammalia</taxon>
        <taxon>Eutheria</taxon>
        <taxon>Euarchontoglires</taxon>
        <taxon>Primates</taxon>
        <taxon>Haplorrhini</taxon>
        <taxon>Catarrhini</taxon>
        <taxon>Hominidae</taxon>
        <taxon>Homo</taxon>
    </lineage>
</organism>
<keyword id="KW-0009">Actin-binding</keyword>
<keyword id="KW-0963">Cytoplasm</keyword>
<keyword id="KW-0206">Cytoskeleton</keyword>
<keyword id="KW-0903">Direct protein sequencing</keyword>
<keyword id="KW-0597">Phosphoprotein</keyword>
<keyword id="KW-1267">Proteomics identification</keyword>
<keyword id="KW-1185">Reference proteome</keyword>
<reference key="1">
    <citation type="submission" date="2000-02" db="EMBL/GenBank/DDBJ databases">
        <authorList>
            <person name="Conley C.A."/>
            <person name="Fowler V.M."/>
        </authorList>
    </citation>
    <scope>NUCLEOTIDE SEQUENCE [MRNA]</scope>
</reference>
<reference key="2">
    <citation type="journal article" date="2000" name="Genomics">
        <title>Sequencing, expression analysis, and mapping of three unique human tropomodulin genes and their mouse orthologs.</title>
        <authorList>
            <person name="Cox P.R."/>
            <person name="Zoghbi H.Y."/>
        </authorList>
    </citation>
    <scope>NUCLEOTIDE SEQUENCE [MRNA]</scope>
    <scope>TISSUE SPECIFICITY</scope>
</reference>
<reference key="3">
    <citation type="journal article" date="2004" name="Nat. Genet.">
        <title>Complete sequencing and characterization of 21,243 full-length human cDNAs.</title>
        <authorList>
            <person name="Ota T."/>
            <person name="Suzuki Y."/>
            <person name="Nishikawa T."/>
            <person name="Otsuki T."/>
            <person name="Sugiyama T."/>
            <person name="Irie R."/>
            <person name="Wakamatsu A."/>
            <person name="Hayashi K."/>
            <person name="Sato H."/>
            <person name="Nagai K."/>
            <person name="Kimura K."/>
            <person name="Makita H."/>
            <person name="Sekine M."/>
            <person name="Obayashi M."/>
            <person name="Nishi T."/>
            <person name="Shibahara T."/>
            <person name="Tanaka T."/>
            <person name="Ishii S."/>
            <person name="Yamamoto J."/>
            <person name="Saito K."/>
            <person name="Kawai Y."/>
            <person name="Isono Y."/>
            <person name="Nakamura Y."/>
            <person name="Nagahari K."/>
            <person name="Murakami K."/>
            <person name="Yasuda T."/>
            <person name="Iwayanagi T."/>
            <person name="Wagatsuma M."/>
            <person name="Shiratori A."/>
            <person name="Sudo H."/>
            <person name="Hosoiri T."/>
            <person name="Kaku Y."/>
            <person name="Kodaira H."/>
            <person name="Kondo H."/>
            <person name="Sugawara M."/>
            <person name="Takahashi M."/>
            <person name="Kanda K."/>
            <person name="Yokoi T."/>
            <person name="Furuya T."/>
            <person name="Kikkawa E."/>
            <person name="Omura Y."/>
            <person name="Abe K."/>
            <person name="Kamihara K."/>
            <person name="Katsuta N."/>
            <person name="Sato K."/>
            <person name="Tanikawa M."/>
            <person name="Yamazaki M."/>
            <person name="Ninomiya K."/>
            <person name="Ishibashi T."/>
            <person name="Yamashita H."/>
            <person name="Murakawa K."/>
            <person name="Fujimori K."/>
            <person name="Tanai H."/>
            <person name="Kimata M."/>
            <person name="Watanabe M."/>
            <person name="Hiraoka S."/>
            <person name="Chiba Y."/>
            <person name="Ishida S."/>
            <person name="Ono Y."/>
            <person name="Takiguchi S."/>
            <person name="Watanabe S."/>
            <person name="Yosida M."/>
            <person name="Hotuta T."/>
            <person name="Kusano J."/>
            <person name="Kanehori K."/>
            <person name="Takahashi-Fujii A."/>
            <person name="Hara H."/>
            <person name="Tanase T.-O."/>
            <person name="Nomura Y."/>
            <person name="Togiya S."/>
            <person name="Komai F."/>
            <person name="Hara R."/>
            <person name="Takeuchi K."/>
            <person name="Arita M."/>
            <person name="Imose N."/>
            <person name="Musashino K."/>
            <person name="Yuuki H."/>
            <person name="Oshima A."/>
            <person name="Sasaki N."/>
            <person name="Aotsuka S."/>
            <person name="Yoshikawa Y."/>
            <person name="Matsunawa H."/>
            <person name="Ichihara T."/>
            <person name="Shiohata N."/>
            <person name="Sano S."/>
            <person name="Moriya S."/>
            <person name="Momiyama H."/>
            <person name="Satoh N."/>
            <person name="Takami S."/>
            <person name="Terashima Y."/>
            <person name="Suzuki O."/>
            <person name="Nakagawa S."/>
            <person name="Senoh A."/>
            <person name="Mizoguchi H."/>
            <person name="Goto Y."/>
            <person name="Shimizu F."/>
            <person name="Wakebe H."/>
            <person name="Hishigaki H."/>
            <person name="Watanabe T."/>
            <person name="Sugiyama A."/>
            <person name="Takemoto M."/>
            <person name="Kawakami B."/>
            <person name="Yamazaki M."/>
            <person name="Watanabe K."/>
            <person name="Kumagai A."/>
            <person name="Itakura S."/>
            <person name="Fukuzumi Y."/>
            <person name="Fujimori Y."/>
            <person name="Komiyama M."/>
            <person name="Tashiro H."/>
            <person name="Tanigami A."/>
            <person name="Fujiwara T."/>
            <person name="Ono T."/>
            <person name="Yamada K."/>
            <person name="Fujii Y."/>
            <person name="Ozaki K."/>
            <person name="Hirao M."/>
            <person name="Ohmori Y."/>
            <person name="Kawabata A."/>
            <person name="Hikiji T."/>
            <person name="Kobatake N."/>
            <person name="Inagaki H."/>
            <person name="Ikema Y."/>
            <person name="Okamoto S."/>
            <person name="Okitani R."/>
            <person name="Kawakami T."/>
            <person name="Noguchi S."/>
            <person name="Itoh T."/>
            <person name="Shigeta K."/>
            <person name="Senba T."/>
            <person name="Matsumura K."/>
            <person name="Nakajima Y."/>
            <person name="Mizuno T."/>
            <person name="Morinaga M."/>
            <person name="Sasaki M."/>
            <person name="Togashi T."/>
            <person name="Oyama M."/>
            <person name="Hata H."/>
            <person name="Watanabe M."/>
            <person name="Komatsu T."/>
            <person name="Mizushima-Sugano J."/>
            <person name="Satoh T."/>
            <person name="Shirai Y."/>
            <person name="Takahashi Y."/>
            <person name="Nakagawa K."/>
            <person name="Okumura K."/>
            <person name="Nagase T."/>
            <person name="Nomura N."/>
            <person name="Kikuchi H."/>
            <person name="Masuho Y."/>
            <person name="Yamashita R."/>
            <person name="Nakai K."/>
            <person name="Yada T."/>
            <person name="Nakamura Y."/>
            <person name="Ohara O."/>
            <person name="Isogai T."/>
            <person name="Sugano S."/>
        </authorList>
    </citation>
    <scope>NUCLEOTIDE SEQUENCE [LARGE SCALE MRNA]</scope>
    <source>
        <tissue>Brain</tissue>
    </source>
</reference>
<reference key="4">
    <citation type="journal article" date="2004" name="Genome Res.">
        <title>The status, quality, and expansion of the NIH full-length cDNA project: the Mammalian Gene Collection (MGC).</title>
        <authorList>
            <consortium name="The MGC Project Team"/>
        </authorList>
    </citation>
    <scope>NUCLEOTIDE SEQUENCE [LARGE SCALE MRNA]</scope>
    <source>
        <tissue>Adrenal gland</tissue>
    </source>
</reference>
<reference key="5">
    <citation type="journal article" date="2007" name="BMC Genomics">
        <title>The full-ORF clone resource of the German cDNA consortium.</title>
        <authorList>
            <person name="Bechtel S."/>
            <person name="Rosenfelder H."/>
            <person name="Duda A."/>
            <person name="Schmidt C.P."/>
            <person name="Ernst U."/>
            <person name="Wellenreuther R."/>
            <person name="Mehrle A."/>
            <person name="Schuster C."/>
            <person name="Bahr A."/>
            <person name="Bloecker H."/>
            <person name="Heubner D."/>
            <person name="Hoerlein A."/>
            <person name="Michel G."/>
            <person name="Wedler H."/>
            <person name="Koehrer K."/>
            <person name="Ottenwaelder B."/>
            <person name="Poustka A."/>
            <person name="Wiemann S."/>
            <person name="Schupp I."/>
        </authorList>
    </citation>
    <scope>NUCLEOTIDE SEQUENCE [LARGE SCALE MRNA] OF 264-352</scope>
    <source>
        <tissue>Testis</tissue>
    </source>
</reference>
<reference key="6">
    <citation type="submission" date="2007-03" db="UniProtKB">
        <authorList>
            <person name="Lubec G."/>
            <person name="Afjehi-Sadat L."/>
        </authorList>
    </citation>
    <scope>PROTEIN SEQUENCE OF 318-328</scope>
    <scope>IDENTIFICATION BY MASS SPECTROMETRY</scope>
    <source>
        <tissue>Brain</tissue>
        <tissue>Cajal-Retzius cell</tissue>
    </source>
</reference>
<reference key="7">
    <citation type="journal article" date="2008" name="Proc. Natl. Acad. Sci. U.S.A.">
        <title>A quantitative atlas of mitotic phosphorylation.</title>
        <authorList>
            <person name="Dephoure N."/>
            <person name="Zhou C."/>
            <person name="Villen J."/>
            <person name="Beausoleil S.A."/>
            <person name="Bakalarski C.E."/>
            <person name="Elledge S.J."/>
            <person name="Gygi S.P."/>
        </authorList>
    </citation>
    <scope>PHOSPHORYLATION [LARGE SCALE ANALYSIS] AT SER-25</scope>
    <scope>IDENTIFICATION BY MASS SPECTROMETRY [LARGE SCALE ANALYSIS]</scope>
    <source>
        <tissue>Cervix carcinoma</tissue>
    </source>
</reference>
<reference key="8">
    <citation type="journal article" date="2009" name="Anal. Chem.">
        <title>Lys-N and trypsin cover complementary parts of the phosphoproteome in a refined SCX-based approach.</title>
        <authorList>
            <person name="Gauci S."/>
            <person name="Helbig A.O."/>
            <person name="Slijper M."/>
            <person name="Krijgsveld J."/>
            <person name="Heck A.J."/>
            <person name="Mohammed S."/>
        </authorList>
    </citation>
    <scope>IDENTIFICATION BY MASS SPECTROMETRY [LARGE SCALE ANALYSIS]</scope>
</reference>
<reference key="9">
    <citation type="journal article" date="2009" name="Sci. Signal.">
        <title>Quantitative phosphoproteomic analysis of T cell receptor signaling reveals system-wide modulation of protein-protein interactions.</title>
        <authorList>
            <person name="Mayya V."/>
            <person name="Lundgren D.H."/>
            <person name="Hwang S.-I."/>
            <person name="Rezaul K."/>
            <person name="Wu L."/>
            <person name="Eng J.K."/>
            <person name="Rodionov V."/>
            <person name="Han D.K."/>
        </authorList>
    </citation>
    <scope>IDENTIFICATION BY MASS SPECTROMETRY [LARGE SCALE ANALYSIS]</scope>
    <source>
        <tissue>Leukemic T-cell</tissue>
    </source>
</reference>
<reference key="10">
    <citation type="journal article" date="2010" name="Sci. Signal.">
        <title>Quantitative phosphoproteomics reveals widespread full phosphorylation site occupancy during mitosis.</title>
        <authorList>
            <person name="Olsen J.V."/>
            <person name="Vermeulen M."/>
            <person name="Santamaria A."/>
            <person name="Kumar C."/>
            <person name="Miller M.L."/>
            <person name="Jensen L.J."/>
            <person name="Gnad F."/>
            <person name="Cox J."/>
            <person name="Jensen T.S."/>
            <person name="Nigg E.A."/>
            <person name="Brunak S."/>
            <person name="Mann M."/>
        </authorList>
    </citation>
    <scope>PHOSPHORYLATION [LARGE SCALE ANALYSIS] AT SER-25</scope>
    <scope>IDENTIFICATION BY MASS SPECTROMETRY [LARGE SCALE ANALYSIS]</scope>
    <source>
        <tissue>Cervix carcinoma</tissue>
    </source>
</reference>
<reference key="11">
    <citation type="journal article" date="2011" name="BMC Syst. Biol.">
        <title>Initial characterization of the human central proteome.</title>
        <authorList>
            <person name="Burkard T.R."/>
            <person name="Planyavsky M."/>
            <person name="Kaupe I."/>
            <person name="Breitwieser F.P."/>
            <person name="Buerckstuemmer T."/>
            <person name="Bennett K.L."/>
            <person name="Superti-Furga G."/>
            <person name="Colinge J."/>
        </authorList>
    </citation>
    <scope>IDENTIFICATION BY MASS SPECTROMETRY [LARGE SCALE ANALYSIS]</scope>
</reference>
<reference key="12">
    <citation type="journal article" date="2011" name="Sci. Signal.">
        <title>System-wide temporal characterization of the proteome and phosphoproteome of human embryonic stem cell differentiation.</title>
        <authorList>
            <person name="Rigbolt K.T."/>
            <person name="Prokhorova T.A."/>
            <person name="Akimov V."/>
            <person name="Henningsen J."/>
            <person name="Johansen P.T."/>
            <person name="Kratchmarova I."/>
            <person name="Kassem M."/>
            <person name="Mann M."/>
            <person name="Olsen J.V."/>
            <person name="Blagoev B."/>
        </authorList>
    </citation>
    <scope>PHOSPHORYLATION [LARGE SCALE ANALYSIS] AT SER-25</scope>
    <scope>IDENTIFICATION BY MASS SPECTROMETRY [LARGE SCALE ANALYSIS]</scope>
</reference>
<reference key="13">
    <citation type="journal article" date="2013" name="J. Proteome Res.">
        <title>Toward a comprehensive characterization of a human cancer cell phosphoproteome.</title>
        <authorList>
            <person name="Zhou H."/>
            <person name="Di Palma S."/>
            <person name="Preisinger C."/>
            <person name="Peng M."/>
            <person name="Polat A.N."/>
            <person name="Heck A.J."/>
            <person name="Mohammed S."/>
        </authorList>
    </citation>
    <scope>PHOSPHORYLATION [LARGE SCALE ANALYSIS] AT SER-25</scope>
    <scope>IDENTIFICATION BY MASS SPECTROMETRY [LARGE SCALE ANALYSIS]</scope>
    <source>
        <tissue>Cervix carcinoma</tissue>
        <tissue>Erythroleukemia</tissue>
    </source>
</reference>
<reference key="14">
    <citation type="journal article" date="2014" name="J. Proteomics">
        <title>An enzyme assisted RP-RPLC approach for in-depth analysis of human liver phosphoproteome.</title>
        <authorList>
            <person name="Bian Y."/>
            <person name="Song C."/>
            <person name="Cheng K."/>
            <person name="Dong M."/>
            <person name="Wang F."/>
            <person name="Huang J."/>
            <person name="Sun D."/>
            <person name="Wang L."/>
            <person name="Ye M."/>
            <person name="Zou H."/>
        </authorList>
    </citation>
    <scope>PHOSPHORYLATION [LARGE SCALE ANALYSIS] AT SER-25</scope>
    <scope>IDENTIFICATION BY MASS SPECTROMETRY [LARGE SCALE ANALYSIS]</scope>
    <source>
        <tissue>Liver</tissue>
    </source>
</reference>
<reference key="15">
    <citation type="journal article" date="2015" name="Proteomics">
        <title>N-terminome analysis of the human mitochondrial proteome.</title>
        <authorList>
            <person name="Vaca Jacome A.S."/>
            <person name="Rabilloud T."/>
            <person name="Schaeffer-Reiss C."/>
            <person name="Rompais M."/>
            <person name="Ayoub D."/>
            <person name="Lane L."/>
            <person name="Bairoch A."/>
            <person name="Van Dorsselaer A."/>
            <person name="Carapito C."/>
        </authorList>
    </citation>
    <scope>IDENTIFICATION BY MASS SPECTROMETRY [LARGE SCALE ANALYSIS]</scope>
</reference>
<reference key="16">
    <citation type="journal article" date="2023" name="Proc. Natl. Acad. Sci. U.S.A.">
        <title>A human FLII gene variant alters sarcomeric actin thin filament length and predisposes to cardiomyopathy.</title>
        <authorList>
            <person name="Kuwabara Y."/>
            <person name="York A.J."/>
            <person name="Lin S.C."/>
            <person name="Sargent M.A."/>
            <person name="Grimes K.M."/>
            <person name="Pirruccello J.P."/>
            <person name="Molkentin J.D."/>
        </authorList>
    </citation>
    <scope>INTERACTION WITH FLII</scope>
</reference>
<proteinExistence type="evidence at protein level"/>
<feature type="chain" id="PRO_0000186134" description="Tropomodulin-3">
    <location>
        <begin position="1"/>
        <end position="352"/>
    </location>
</feature>
<feature type="modified residue" description="Phosphoserine" evidence="5 6 7 8 9">
    <location>
        <position position="25"/>
    </location>
</feature>
<feature type="sequence conflict" description="In Ref. 2; AAF31670." evidence="4" ref="2">
    <original>T</original>
    <variation>S</variation>
    <location>
        <position position="27"/>
    </location>
</feature>
<gene>
    <name type="primary">TMOD3</name>
</gene>
<accession>Q9NYL9</accession>
<accession>B2R6G7</accession>
<accession>Q9NT43</accession>
<accession>Q9NZR0</accession>
<protein>
    <recommendedName>
        <fullName>Tropomodulin-3</fullName>
    </recommendedName>
    <alternativeName>
        <fullName>Ubiquitous tropomodulin</fullName>
        <shortName>U-Tmod</shortName>
    </alternativeName>
</protein>
<name>TMOD3_HUMAN</name>